<accession>B3CLK1</accession>
<keyword id="KW-0648">Protein biosynthesis</keyword>
<keyword id="KW-0808">Transferase</keyword>
<gene>
    <name evidence="1" type="primary">fmt</name>
    <name type="ordered locus">WP0661</name>
</gene>
<organism>
    <name type="scientific">Wolbachia pipientis subsp. Culex pipiens (strain wPip)</name>
    <dbReference type="NCBI Taxonomy" id="570417"/>
    <lineage>
        <taxon>Bacteria</taxon>
        <taxon>Pseudomonadati</taxon>
        <taxon>Pseudomonadota</taxon>
        <taxon>Alphaproteobacteria</taxon>
        <taxon>Rickettsiales</taxon>
        <taxon>Anaplasmataceae</taxon>
        <taxon>Wolbachieae</taxon>
        <taxon>Wolbachia</taxon>
    </lineage>
</organism>
<protein>
    <recommendedName>
        <fullName evidence="1">Methionyl-tRNA formyltransferase</fullName>
        <ecNumber evidence="1">2.1.2.9</ecNumber>
    </recommendedName>
</protein>
<evidence type="ECO:0000255" key="1">
    <source>
        <dbReference type="HAMAP-Rule" id="MF_00182"/>
    </source>
</evidence>
<feature type="chain" id="PRO_1000098460" description="Methionyl-tRNA formyltransferase">
    <location>
        <begin position="1"/>
        <end position="299"/>
    </location>
</feature>
<feature type="binding site" evidence="1">
    <location>
        <begin position="109"/>
        <end position="112"/>
    </location>
    <ligand>
        <name>(6S)-5,6,7,8-tetrahydrofolate</name>
        <dbReference type="ChEBI" id="CHEBI:57453"/>
    </ligand>
</feature>
<proteinExistence type="inferred from homology"/>
<comment type="function">
    <text evidence="1">Attaches a formyl group to the free amino group of methionyl-tRNA(fMet). The formyl group appears to play a dual role in the initiator identity of N-formylmethionyl-tRNA by promoting its recognition by IF2 and preventing the misappropriation of this tRNA by the elongation apparatus.</text>
</comment>
<comment type="catalytic activity">
    <reaction evidence="1">
        <text>L-methionyl-tRNA(fMet) + (6R)-10-formyltetrahydrofolate = N-formyl-L-methionyl-tRNA(fMet) + (6S)-5,6,7,8-tetrahydrofolate + H(+)</text>
        <dbReference type="Rhea" id="RHEA:24380"/>
        <dbReference type="Rhea" id="RHEA-COMP:9952"/>
        <dbReference type="Rhea" id="RHEA-COMP:9953"/>
        <dbReference type="ChEBI" id="CHEBI:15378"/>
        <dbReference type="ChEBI" id="CHEBI:57453"/>
        <dbReference type="ChEBI" id="CHEBI:78530"/>
        <dbReference type="ChEBI" id="CHEBI:78844"/>
        <dbReference type="ChEBI" id="CHEBI:195366"/>
        <dbReference type="EC" id="2.1.2.9"/>
    </reaction>
</comment>
<comment type="similarity">
    <text evidence="1">Belongs to the Fmt family.</text>
</comment>
<name>FMT_WOLPP</name>
<sequence length="299" mass="33285">MRIIFMGSPGFAVGALNLLLKLQSEVVAVYTKAPKPSGRRQRLTKSPVHIVAEKSDIEVCTPASLKSSIEQEKFGNFKPDVAVVAAYGLILPKEILNIPKYGCINIHPSLLPRWRGAAPIQHTILAGDQETGVSIMQLDEGLDSGPILKQKKFLIEKSDNYKTLYDKLSELGSDLLLKVLNEIEKQVPLKQSDNDACYADKVKDYKIYASDACEIAYRKVKAFYPKAFIKVENKRIKILDAEFEAFTSGQGEIINDNMHISLKGGTLIPKVVQMEGRNPCDIKDFVRGLKSSLTKKFIE</sequence>
<dbReference type="EC" id="2.1.2.9" evidence="1"/>
<dbReference type="EMBL" id="AM999887">
    <property type="protein sequence ID" value="CAQ54769.1"/>
    <property type="molecule type" value="Genomic_DNA"/>
</dbReference>
<dbReference type="RefSeq" id="WP_012481877.1">
    <property type="nucleotide sequence ID" value="NC_010981.1"/>
</dbReference>
<dbReference type="SMR" id="B3CLK1"/>
<dbReference type="KEGG" id="wpi:WP0661"/>
<dbReference type="eggNOG" id="COG0223">
    <property type="taxonomic scope" value="Bacteria"/>
</dbReference>
<dbReference type="HOGENOM" id="CLU_033347_1_2_5"/>
<dbReference type="Proteomes" id="UP000008814">
    <property type="component" value="Chromosome"/>
</dbReference>
<dbReference type="GO" id="GO:0005829">
    <property type="term" value="C:cytosol"/>
    <property type="evidence" value="ECO:0007669"/>
    <property type="project" value="TreeGrafter"/>
</dbReference>
<dbReference type="GO" id="GO:0004479">
    <property type="term" value="F:methionyl-tRNA formyltransferase activity"/>
    <property type="evidence" value="ECO:0007669"/>
    <property type="project" value="UniProtKB-UniRule"/>
</dbReference>
<dbReference type="CDD" id="cd08646">
    <property type="entry name" value="FMT_core_Met-tRNA-FMT_N"/>
    <property type="match status" value="1"/>
</dbReference>
<dbReference type="Gene3D" id="3.40.50.12230">
    <property type="match status" value="1"/>
</dbReference>
<dbReference type="HAMAP" id="MF_00182">
    <property type="entry name" value="Formyl_trans"/>
    <property type="match status" value="1"/>
</dbReference>
<dbReference type="InterPro" id="IPR005794">
    <property type="entry name" value="Fmt"/>
</dbReference>
<dbReference type="InterPro" id="IPR005793">
    <property type="entry name" value="Formyl_trans_C"/>
</dbReference>
<dbReference type="InterPro" id="IPR002376">
    <property type="entry name" value="Formyl_transf_N"/>
</dbReference>
<dbReference type="InterPro" id="IPR036477">
    <property type="entry name" value="Formyl_transf_N_sf"/>
</dbReference>
<dbReference type="InterPro" id="IPR011034">
    <property type="entry name" value="Formyl_transferase-like_C_sf"/>
</dbReference>
<dbReference type="InterPro" id="IPR041711">
    <property type="entry name" value="Met-tRNA-FMT_N"/>
</dbReference>
<dbReference type="NCBIfam" id="TIGR00460">
    <property type="entry name" value="fmt"/>
    <property type="match status" value="1"/>
</dbReference>
<dbReference type="PANTHER" id="PTHR11138">
    <property type="entry name" value="METHIONYL-TRNA FORMYLTRANSFERASE"/>
    <property type="match status" value="1"/>
</dbReference>
<dbReference type="PANTHER" id="PTHR11138:SF5">
    <property type="entry name" value="METHIONYL-TRNA FORMYLTRANSFERASE, MITOCHONDRIAL"/>
    <property type="match status" value="1"/>
</dbReference>
<dbReference type="Pfam" id="PF02911">
    <property type="entry name" value="Formyl_trans_C"/>
    <property type="match status" value="1"/>
</dbReference>
<dbReference type="Pfam" id="PF00551">
    <property type="entry name" value="Formyl_trans_N"/>
    <property type="match status" value="1"/>
</dbReference>
<dbReference type="SUPFAM" id="SSF50486">
    <property type="entry name" value="FMT C-terminal domain-like"/>
    <property type="match status" value="1"/>
</dbReference>
<dbReference type="SUPFAM" id="SSF53328">
    <property type="entry name" value="Formyltransferase"/>
    <property type="match status" value="1"/>
</dbReference>
<reference key="1">
    <citation type="journal article" date="2008" name="Mol. Biol. Evol.">
        <title>Genome evolution of Wolbachia strain wPip from the Culex pipiens group.</title>
        <authorList>
            <person name="Klasson L."/>
            <person name="Walker T."/>
            <person name="Sebaihia M."/>
            <person name="Sanders M.J."/>
            <person name="Quail M.A."/>
            <person name="Lord A."/>
            <person name="Sanders S."/>
            <person name="Earl J."/>
            <person name="O'Neill S.L."/>
            <person name="Thomson N."/>
            <person name="Sinkins S.P."/>
            <person name="Parkhill J."/>
        </authorList>
    </citation>
    <scope>NUCLEOTIDE SEQUENCE [LARGE SCALE GENOMIC DNA]</scope>
    <source>
        <strain>wPip</strain>
    </source>
</reference>